<keyword id="KW-0067">ATP-binding</keyword>
<keyword id="KW-0997">Cell inner membrane</keyword>
<keyword id="KW-1003">Cell membrane</keyword>
<keyword id="KW-0472">Membrane</keyword>
<keyword id="KW-0536">Nodulation</keyword>
<keyword id="KW-0547">Nucleotide-binding</keyword>
<keyword id="KW-1278">Translocase</keyword>
<keyword id="KW-0813">Transport</keyword>
<reference key="1">
    <citation type="journal article" date="1990" name="Nucleic Acids Res.">
        <title>Nucleotide sequence of Rhizobium loti nodI.</title>
        <authorList>
            <person name="Young C.A."/>
            <person name="Collins-Emerson J.M."/>
            <person name="Terzaghi E.A."/>
            <person name="Scott D.B."/>
        </authorList>
    </citation>
    <scope>NUCLEOTIDE SEQUENCE [GENOMIC DNA]</scope>
    <source>
        <strain>NZP 2213</strain>
    </source>
</reference>
<reference key="2">
    <citation type="journal article" date="2002" name="J. Bacteriol.">
        <title>Comparative sequence analysis of the symbiosis island of Mesorhizobium loti strain R7A.</title>
        <authorList>
            <person name="Sullivan J.T."/>
            <person name="Trzebiatowski J.R."/>
            <person name="Cruickshank R.W."/>
            <person name="Gouzy J."/>
            <person name="Brown S.D."/>
            <person name="Elliot R.M."/>
            <person name="Fleetwood D.J."/>
            <person name="McCallum N.G."/>
            <person name="Rossbach U."/>
            <person name="Stuart G.S."/>
            <person name="Weaver J.E."/>
            <person name="Webby R.J."/>
            <person name="de Bruijn F.J."/>
            <person name="Ronson C.W."/>
        </authorList>
    </citation>
    <scope>NUCLEOTIDE SEQUENCE [GENOMIC DNA]</scope>
    <source>
        <strain>R7A</strain>
    </source>
</reference>
<reference key="3">
    <citation type="journal article" date="2000" name="DNA Res.">
        <title>Complete genome structure of the nitrogen-fixing symbiotic bacterium Mesorhizobium loti.</title>
        <authorList>
            <person name="Kaneko T."/>
            <person name="Nakamura Y."/>
            <person name="Sato S."/>
            <person name="Asamizu E."/>
            <person name="Kato T."/>
            <person name="Sasamoto S."/>
            <person name="Watanabe A."/>
            <person name="Idesawa K."/>
            <person name="Ishikawa A."/>
            <person name="Kawashima K."/>
            <person name="Kimura T."/>
            <person name="Kishida Y."/>
            <person name="Kiyokawa C."/>
            <person name="Kohara M."/>
            <person name="Matsumoto M."/>
            <person name="Matsuno A."/>
            <person name="Mochizuki Y."/>
            <person name="Nakayama S."/>
            <person name="Nakazaki N."/>
            <person name="Shimpo S."/>
            <person name="Sugimoto M."/>
            <person name="Takeuchi C."/>
            <person name="Yamada M."/>
            <person name="Tabata S."/>
        </authorList>
    </citation>
    <scope>NUCLEOTIDE SEQUENCE [LARGE SCALE GENOMIC DNA]</scope>
    <source>
        <strain>LMG 29417 / CECT 9101 / MAFF 303099</strain>
    </source>
</reference>
<evidence type="ECO:0000255" key="1">
    <source>
        <dbReference type="HAMAP-Rule" id="MF_01704"/>
    </source>
</evidence>
<evidence type="ECO:0000256" key="2">
    <source>
        <dbReference type="SAM" id="MobiDB-lite"/>
    </source>
</evidence>
<evidence type="ECO:0000305" key="3"/>
<protein>
    <recommendedName>
        <fullName evidence="1">Nod factor export ATP-binding protein I</fullName>
        <ecNumber evidence="1">7.6.2.-</ecNumber>
    </recommendedName>
    <alternativeName>
        <fullName evidence="1">Nodulation ATP-binding protein I</fullName>
    </alternativeName>
</protein>
<sequence length="340" mass="37428">MLKRKLGPEDLRRLETPAIERESHGQTSAKSSVPDSASTVAVDFAGVTKSYGNKIVVDELSFSVASGECFGLLGPNGAGKSTIARMLLGMTCPDAGTITVLGVPVPARARLARRGIGVVPQFDNLDQEFTVRENLLVFGRYFGMSTRQSEAVIPSLLEFARLERKADARVSELSGGMKRCLTMARALINDPQLIVMDEPTTGLDPHARHLIWERLRALLARGKTIILTTHFMEEAERLCDRLCVLEKGRNIAEGGPQALIDEHIGCQVMEIYGGDPHELLSLVKPHSQRIEVSGETLYCYAPDPDQVRTQLQGRAGLRLLLRPANLEDVFLRLTGREMEE</sequence>
<gene>
    <name evidence="1" type="primary">nodI</name>
    <name type="ordered locus">mlr6164</name>
</gene>
<proteinExistence type="inferred from homology"/>
<accession>P23703</accession>
<accession>Q8KJI6</accession>
<organism>
    <name type="scientific">Mesorhizobium japonicum (strain LMG 29417 / CECT 9101 / MAFF 303099)</name>
    <name type="common">Mesorhizobium loti (strain MAFF 303099)</name>
    <dbReference type="NCBI Taxonomy" id="266835"/>
    <lineage>
        <taxon>Bacteria</taxon>
        <taxon>Pseudomonadati</taxon>
        <taxon>Pseudomonadota</taxon>
        <taxon>Alphaproteobacteria</taxon>
        <taxon>Hyphomicrobiales</taxon>
        <taxon>Phyllobacteriaceae</taxon>
        <taxon>Mesorhizobium</taxon>
    </lineage>
</organism>
<name>NODI_RHILO</name>
<comment type="function">
    <text evidence="1">Part of the ABC transporter complex NodIJ involved in the export of the nodulation factors (Nod factors), the bacterial signal molecules that induce symbiosis and subsequent nodulation induction. Nod factors are LCO (lipo-chitin oligosaccharide), a modified beta-1,4-linked N-acetylglucosamine oligosaccharide. This subunit is responsible for energy coupling to the transport system.</text>
</comment>
<comment type="subunit">
    <text evidence="1">The complex is composed of two ATP-binding proteins (NodI) and two transmembrane proteins (NodJ).</text>
</comment>
<comment type="subcellular location">
    <subcellularLocation>
        <location evidence="1">Cell inner membrane</location>
        <topology evidence="1">Peripheral membrane protein</topology>
    </subcellularLocation>
</comment>
<comment type="similarity">
    <text evidence="1">Belongs to the ABC transporter superfamily. Lipooligosaccharide exporter (TC 3.A.1.102) family.</text>
</comment>
<comment type="sequence caution" evidence="3">
    <conflict type="erroneous initiation">
        <sequence resource="EMBL-CDS" id="CAA39236"/>
    </conflict>
    <text>Truncated N-terminus.</text>
</comment>
<comment type="sequence caution" evidence="3">
    <conflict type="erroneous initiation">
        <sequence resource="EMBL-CDS" id="CAD31532"/>
    </conflict>
    <text>Extended N-terminus.</text>
</comment>
<feature type="chain" id="PRO_0000092640" description="Nod factor export ATP-binding protein I">
    <location>
        <begin position="1"/>
        <end position="340"/>
    </location>
</feature>
<feature type="domain" description="ABC transporter" evidence="1">
    <location>
        <begin position="42"/>
        <end position="272"/>
    </location>
</feature>
<feature type="region of interest" description="Disordered" evidence="2">
    <location>
        <begin position="1"/>
        <end position="34"/>
    </location>
</feature>
<feature type="compositionally biased region" description="Basic and acidic residues" evidence="2">
    <location>
        <begin position="1"/>
        <end position="24"/>
    </location>
</feature>
<feature type="compositionally biased region" description="Polar residues" evidence="2">
    <location>
        <begin position="25"/>
        <end position="34"/>
    </location>
</feature>
<feature type="binding site" evidence="1">
    <location>
        <begin position="74"/>
        <end position="81"/>
    </location>
    <ligand>
        <name>ATP</name>
        <dbReference type="ChEBI" id="CHEBI:30616"/>
    </ligand>
</feature>
<feature type="sequence conflict" description="In Ref. 1; CAA39236." evidence="3" ref="1">
    <original>D</original>
    <variation>E</variation>
    <location>
        <position position="10"/>
    </location>
</feature>
<feature type="sequence conflict" description="In Ref. 2; CAD31532." evidence="3" ref="2">
    <original>L</original>
    <variation>F</variation>
    <location>
        <position position="14"/>
    </location>
</feature>
<feature type="sequence conflict" description="In Ref. 2; CAD31532." evidence="3" ref="2">
    <original>S</original>
    <variation>F</variation>
    <location>
        <position position="23"/>
    </location>
</feature>
<feature type="sequence conflict" description="In Ref. 2; CAD31532." evidence="3" ref="2">
    <original>A</original>
    <variation>L</variation>
    <location>
        <position position="37"/>
    </location>
</feature>
<feature type="sequence conflict" description="In Ref. 1; CAA39236." evidence="3" ref="1">
    <original>T</original>
    <variation>A</variation>
    <location>
        <position position="97"/>
    </location>
</feature>
<feature type="sequence conflict" description="In Ref. 1; CAA39236." evidence="3" ref="1">
    <original>F</original>
    <variation>L</variation>
    <location>
        <position position="129"/>
    </location>
</feature>
<feature type="sequence conflict" description="In Ref. 1; CAA39236." evidence="3" ref="1">
    <original>D</original>
    <variation>N</variation>
    <location>
        <position position="167"/>
    </location>
</feature>
<dbReference type="EC" id="7.6.2.-" evidence="1"/>
<dbReference type="EMBL" id="X55705">
    <property type="protein sequence ID" value="CAA39236.1"/>
    <property type="status" value="ALT_INIT"/>
    <property type="molecule type" value="Genomic_DNA"/>
</dbReference>
<dbReference type="EMBL" id="AL672113">
    <property type="protein sequence ID" value="CAD31532.1"/>
    <property type="status" value="ALT_INIT"/>
    <property type="molecule type" value="Genomic_DNA"/>
</dbReference>
<dbReference type="EMBL" id="BA000012">
    <property type="protein sequence ID" value="BAB52501.1"/>
    <property type="molecule type" value="Genomic_DNA"/>
</dbReference>
<dbReference type="PIR" id="S13590">
    <property type="entry name" value="S13590"/>
</dbReference>
<dbReference type="SMR" id="P23703"/>
<dbReference type="KEGG" id="mlo:mlr6164"/>
<dbReference type="eggNOG" id="COG1131">
    <property type="taxonomic scope" value="Bacteria"/>
</dbReference>
<dbReference type="HOGENOM" id="CLU_000604_1_2_5"/>
<dbReference type="Proteomes" id="UP000000552">
    <property type="component" value="Chromosome"/>
</dbReference>
<dbReference type="GO" id="GO:0005886">
    <property type="term" value="C:plasma membrane"/>
    <property type="evidence" value="ECO:0007669"/>
    <property type="project" value="UniProtKB-SubCell"/>
</dbReference>
<dbReference type="GO" id="GO:0005524">
    <property type="term" value="F:ATP binding"/>
    <property type="evidence" value="ECO:0007669"/>
    <property type="project" value="UniProtKB-KW"/>
</dbReference>
<dbReference type="GO" id="GO:0016887">
    <property type="term" value="F:ATP hydrolysis activity"/>
    <property type="evidence" value="ECO:0007669"/>
    <property type="project" value="InterPro"/>
</dbReference>
<dbReference type="GO" id="GO:0022857">
    <property type="term" value="F:transmembrane transporter activity"/>
    <property type="evidence" value="ECO:0007669"/>
    <property type="project" value="InterPro"/>
</dbReference>
<dbReference type="CDD" id="cd03263">
    <property type="entry name" value="ABC_subfamily_A"/>
    <property type="match status" value="1"/>
</dbReference>
<dbReference type="FunFam" id="3.40.50.300:FF:000589">
    <property type="entry name" value="ABC transporter, ATP-binding subunit"/>
    <property type="match status" value="1"/>
</dbReference>
<dbReference type="Gene3D" id="3.40.50.300">
    <property type="entry name" value="P-loop containing nucleotide triphosphate hydrolases"/>
    <property type="match status" value="1"/>
</dbReference>
<dbReference type="InterPro" id="IPR003593">
    <property type="entry name" value="AAA+_ATPase"/>
</dbReference>
<dbReference type="InterPro" id="IPR003439">
    <property type="entry name" value="ABC_transporter-like_ATP-bd"/>
</dbReference>
<dbReference type="InterPro" id="IPR017871">
    <property type="entry name" value="ABC_transporter-like_CS"/>
</dbReference>
<dbReference type="InterPro" id="IPR050763">
    <property type="entry name" value="ABC_transporter_ATP-binding"/>
</dbReference>
<dbReference type="InterPro" id="IPR005978">
    <property type="entry name" value="ABC_transptNodI"/>
</dbReference>
<dbReference type="InterPro" id="IPR027417">
    <property type="entry name" value="P-loop_NTPase"/>
</dbReference>
<dbReference type="NCBIfam" id="TIGR01288">
    <property type="entry name" value="nodI"/>
    <property type="match status" value="1"/>
</dbReference>
<dbReference type="NCBIfam" id="NF010059">
    <property type="entry name" value="PRK13536.1"/>
    <property type="match status" value="1"/>
</dbReference>
<dbReference type="PANTHER" id="PTHR42711">
    <property type="entry name" value="ABC TRANSPORTER ATP-BINDING PROTEIN"/>
    <property type="match status" value="1"/>
</dbReference>
<dbReference type="PANTHER" id="PTHR42711:SF5">
    <property type="entry name" value="ABC TRANSPORTER ATP-BINDING PROTEIN NATA"/>
    <property type="match status" value="1"/>
</dbReference>
<dbReference type="Pfam" id="PF00005">
    <property type="entry name" value="ABC_tran"/>
    <property type="match status" value="1"/>
</dbReference>
<dbReference type="SMART" id="SM00382">
    <property type="entry name" value="AAA"/>
    <property type="match status" value="1"/>
</dbReference>
<dbReference type="SUPFAM" id="SSF52540">
    <property type="entry name" value="P-loop containing nucleoside triphosphate hydrolases"/>
    <property type="match status" value="1"/>
</dbReference>
<dbReference type="PROSITE" id="PS00211">
    <property type="entry name" value="ABC_TRANSPORTER_1"/>
    <property type="match status" value="1"/>
</dbReference>
<dbReference type="PROSITE" id="PS50893">
    <property type="entry name" value="ABC_TRANSPORTER_2"/>
    <property type="match status" value="1"/>
</dbReference>
<dbReference type="PROSITE" id="PS51240">
    <property type="entry name" value="NODI"/>
    <property type="match status" value="1"/>
</dbReference>